<evidence type="ECO:0000250" key="1"/>
<evidence type="ECO:0000255" key="2"/>
<evidence type="ECO:0000255" key="3">
    <source>
        <dbReference type="PROSITE-ProRule" id="PRU00803"/>
    </source>
</evidence>
<evidence type="ECO:0000305" key="4"/>
<organism>
    <name type="scientific">Rattus norvegicus</name>
    <name type="common">Rat</name>
    <dbReference type="NCBI Taxonomy" id="10116"/>
    <lineage>
        <taxon>Eukaryota</taxon>
        <taxon>Metazoa</taxon>
        <taxon>Chordata</taxon>
        <taxon>Craniata</taxon>
        <taxon>Vertebrata</taxon>
        <taxon>Euteleostomi</taxon>
        <taxon>Mammalia</taxon>
        <taxon>Eutheria</taxon>
        <taxon>Euarchontoglires</taxon>
        <taxon>Glires</taxon>
        <taxon>Rodentia</taxon>
        <taxon>Myomorpha</taxon>
        <taxon>Muroidea</taxon>
        <taxon>Muridae</taxon>
        <taxon>Murinae</taxon>
        <taxon>Rattus</taxon>
    </lineage>
</organism>
<comment type="function">
    <text>This protein hydrolyzes the inositol phosphate linkage in proteins anchored by phosphatidylinositol glycans (GPI-anchor) thus releasing these proteins from the membrane.</text>
</comment>
<comment type="catalytic activity">
    <reaction>
        <text>a 6-(alpha-D-glucosaminyl)-1-(1,2-diacyl-sn-glycero-3-phospho)-1D-myo-inositol + H2O = 6-(alpha-D-glucosaminyl)-1D-myo-inositol + a 1,2-diacyl-sn-glycero-3-phosphate + H(+)</text>
        <dbReference type="Rhea" id="RHEA:10832"/>
        <dbReference type="ChEBI" id="CHEBI:15377"/>
        <dbReference type="ChEBI" id="CHEBI:15378"/>
        <dbReference type="ChEBI" id="CHEBI:57997"/>
        <dbReference type="ChEBI" id="CHEBI:58608"/>
        <dbReference type="ChEBI" id="CHEBI:58700"/>
        <dbReference type="EC" id="3.1.4.50"/>
    </reaction>
</comment>
<comment type="subunit">
    <text evidence="4">Monomer.</text>
</comment>
<comment type="subcellular location">
    <subcellularLocation>
        <location>Secreted</location>
    </subcellularLocation>
    <text evidence="1">Associated with the High-Density Lipoproteins (HDL).</text>
</comment>
<comment type="PTM">
    <text evidence="1">Glycosylated.</text>
</comment>
<comment type="similarity">
    <text evidence="4">Belongs to the GPLD1 family.</text>
</comment>
<keyword id="KW-0325">Glycoprotein</keyword>
<keyword id="KW-0345">HDL</keyword>
<keyword id="KW-0378">Hydrolase</keyword>
<keyword id="KW-0443">Lipid metabolism</keyword>
<keyword id="KW-1185">Reference proteome</keyword>
<keyword id="KW-0677">Repeat</keyword>
<keyword id="KW-0964">Secreted</keyword>
<keyword id="KW-0732">Signal</keyword>
<sequence>MSVGRLWSGLLLLLLFFCSRSSSCGLSTHVEIGHRALQFLQLQDGRINYKELLLEHQDAYQAGTVFPDAFYPSICKQGKFHEVSESTHWTPFLNASIHYIRENYPLPWEKDTEKLVAFLFGVTSHMVADVSWHSLGIEQGFLRTMGAIDFYDSYSEAHSAGDFGGDVLSQFEFNFNYLSRRWYVPIQDLLRIYDNLYGRKVITKNVIVDCTYLQFLEMHGEMLAVSKLYSTYSTKSPFLVEQFQDYFLGGLDDMAFWSTNIYRLTSFMLENGTSDCNLPENPLFISCDGRKNHTLSSSKVQKNDFHRNLTMFISKDIRKNLNYTERGVFYSTGSWAPESVTFMYQTLERNLRMMFTGNSQTALKHVSSPSASYTLSVPYARLGWVMASADLNQDGHGDLVVGAPGYSHPGRFQIGRVYIIYGNDLGLPPIDLDLDKEAHGVLEGFQPSGRFGSALAVLDFNKDGLPDLAVGAPSVGSGQLTYNGSVYVYYGSQQGRLSSSPNITISCKDTYCNLGWALLAADADGDGQHDLVISSPFAPGGGKQRGIVAAFYSHPRRNDKESLTLDEADWKVNGEEDFSWFGYSLHGVTVANRSLLLIGSPTWKNISRMARSSHQKNQEKKSLGRVYGYFPPNRQREITISGDKAMGKLGTSLSSGYVRVNGTLTQVLLVGAPTHDDVSKMAFLTMTLHHGGATRMYELAPEKTQPALFSTFSGDRRFSRFGSVLHLTDLDDDGLDEIIMAAPLRITDVTSGLLGEEDGRVYIYNGMHTTLGDVTGKCKSWMTPCPEEKAQYVLISPEASSRFGSSLVSVRSKERNQVVVAAGRSSWGARLSGALHVYSFSSD</sequence>
<feature type="signal peptide" evidence="2">
    <location>
        <begin position="1"/>
        <end position="23"/>
    </location>
</feature>
<feature type="chain" id="PRO_0000278285" description="Phosphatidylinositol-glycan-specific phospholipase D">
    <location>
        <begin position="24"/>
        <end position="843"/>
    </location>
</feature>
<feature type="repeat" description="FG-GAP 1" evidence="3">
    <location>
        <begin position="368"/>
        <end position="429"/>
    </location>
</feature>
<feature type="repeat" description="FG-GAP 2" evidence="3">
    <location>
        <begin position="435"/>
        <end position="498"/>
    </location>
</feature>
<feature type="repeat" description="FG-GAP 3" evidence="3">
    <location>
        <begin position="500"/>
        <end position="560"/>
    </location>
</feature>
<feature type="repeat" description="FG-GAP 4" evidence="3">
    <location>
        <begin position="564"/>
        <end position="625"/>
    </location>
</feature>
<feature type="repeat" description="FG-GAP 5" evidence="3">
    <location>
        <begin position="635"/>
        <end position="695"/>
    </location>
</feature>
<feature type="repeat" description="FG-GAP 6" evidence="3">
    <location>
        <begin position="707"/>
        <end position="773"/>
    </location>
</feature>
<feature type="repeat" description="FG-GAP 7" evidence="3">
    <location>
        <begin position="791"/>
        <end position="843"/>
    </location>
</feature>
<feature type="glycosylation site" description="N-linked (GlcNAc...) asparagine" evidence="2">
    <location>
        <position position="94"/>
    </location>
</feature>
<feature type="glycosylation site" description="N-linked (GlcNAc...) asparagine" evidence="2">
    <location>
        <position position="271"/>
    </location>
</feature>
<feature type="glycosylation site" description="N-linked (GlcNAc...) asparagine" evidence="2">
    <location>
        <position position="292"/>
    </location>
</feature>
<feature type="glycosylation site" description="N-linked (GlcNAc...) asparagine" evidence="2">
    <location>
        <position position="308"/>
    </location>
</feature>
<feature type="glycosylation site" description="N-linked (GlcNAc...) asparagine" evidence="2">
    <location>
        <position position="322"/>
    </location>
</feature>
<feature type="glycosylation site" description="N-linked (GlcNAc...) asparagine" evidence="2">
    <location>
        <position position="483"/>
    </location>
</feature>
<feature type="glycosylation site" description="N-linked (GlcNAc...) asparagine" evidence="2">
    <location>
        <position position="502"/>
    </location>
</feature>
<feature type="glycosylation site" description="N-linked (GlcNAc...) asparagine" evidence="2">
    <location>
        <position position="592"/>
    </location>
</feature>
<feature type="glycosylation site" description="N-linked (GlcNAc...) asparagine" evidence="2">
    <location>
        <position position="605"/>
    </location>
</feature>
<feature type="glycosylation site" description="N-linked (GlcNAc...) asparagine" evidence="2">
    <location>
        <position position="661"/>
    </location>
</feature>
<gene>
    <name type="primary">Gpld1</name>
</gene>
<reference key="1">
    <citation type="journal article" date="2002" name="Mol. Genet. Metab.">
        <title>Insulin reduces serum glycosylphosphatidylinositol phospholipase D levels in human type I diabetic patients and streptozotocin diabetic rats.</title>
        <authorList>
            <person name="Schofield J.N."/>
            <person name="Stephens J.W."/>
            <person name="Hurel S.J."/>
            <person name="Bell K.M."/>
            <person name="deSouza J.B."/>
            <person name="Rademacher T.W."/>
        </authorList>
    </citation>
    <scope>NUCLEOTIDE SEQUENCE [MRNA]</scope>
    <source>
        <strain>Sprague-Dawley</strain>
        <tissue>Liver</tissue>
    </source>
</reference>
<protein>
    <recommendedName>
        <fullName>Phosphatidylinositol-glycan-specific phospholipase D</fullName>
        <shortName>PI-G PLD</shortName>
        <ecNumber>3.1.4.50</ecNumber>
    </recommendedName>
    <alternativeName>
        <fullName>Glycoprotein phospholipase D</fullName>
    </alternativeName>
    <alternativeName>
        <fullName>Glycosyl-phosphatidylinositol-specific phospholipase D</fullName>
        <shortName>GPI-PLD</shortName>
        <shortName>GPI-specific phospholipase D</shortName>
    </alternativeName>
</protein>
<dbReference type="EC" id="3.1.4.50"/>
<dbReference type="EMBL" id="AJ308109">
    <property type="protein sequence ID" value="CAC87069.1"/>
    <property type="molecule type" value="mRNA"/>
</dbReference>
<dbReference type="RefSeq" id="NP_001093982.1">
    <property type="nucleotide sequence ID" value="NM_001100512.1"/>
</dbReference>
<dbReference type="FunCoup" id="Q8R2H5">
    <property type="interactions" value="19"/>
</dbReference>
<dbReference type="STRING" id="10116.ENSRNOP00000024196"/>
<dbReference type="GlyCosmos" id="Q8R2H5">
    <property type="glycosylation" value="10 sites, No reported glycans"/>
</dbReference>
<dbReference type="GlyGen" id="Q8R2H5">
    <property type="glycosylation" value="10 sites"/>
</dbReference>
<dbReference type="PhosphoSitePlus" id="Q8R2H5"/>
<dbReference type="PaxDb" id="10116-ENSRNOP00000024196"/>
<dbReference type="GeneID" id="291132"/>
<dbReference type="KEGG" id="rno:291132"/>
<dbReference type="UCSC" id="RGD:631371">
    <property type="organism name" value="rat"/>
</dbReference>
<dbReference type="AGR" id="RGD:631371"/>
<dbReference type="CTD" id="2822"/>
<dbReference type="RGD" id="631371">
    <property type="gene designation" value="Gpld1"/>
</dbReference>
<dbReference type="eggNOG" id="KOG3637">
    <property type="taxonomic scope" value="Eukaryota"/>
</dbReference>
<dbReference type="InParanoid" id="Q8R2H5"/>
<dbReference type="PhylomeDB" id="Q8R2H5"/>
<dbReference type="BRENDA" id="3.1.4.50">
    <property type="organism ID" value="5301"/>
</dbReference>
<dbReference type="Reactome" id="R-RNO-163125">
    <property type="pathway name" value="Post-translational modification: synthesis of GPI-anchored proteins"/>
</dbReference>
<dbReference type="PRO" id="PR:Q8R2H5"/>
<dbReference type="Proteomes" id="UP000002494">
    <property type="component" value="Unplaced"/>
</dbReference>
<dbReference type="GO" id="GO:0005737">
    <property type="term" value="C:cytoplasm"/>
    <property type="evidence" value="ECO:0000250"/>
    <property type="project" value="UniProtKB"/>
</dbReference>
<dbReference type="GO" id="GO:0031012">
    <property type="term" value="C:extracellular matrix"/>
    <property type="evidence" value="ECO:0000250"/>
    <property type="project" value="UniProtKB"/>
</dbReference>
<dbReference type="GO" id="GO:0005576">
    <property type="term" value="C:extracellular region"/>
    <property type="evidence" value="ECO:0000266"/>
    <property type="project" value="RGD"/>
</dbReference>
<dbReference type="GO" id="GO:0005615">
    <property type="term" value="C:extracellular space"/>
    <property type="evidence" value="ECO:0000314"/>
    <property type="project" value="UniProtKB"/>
</dbReference>
<dbReference type="GO" id="GO:0034364">
    <property type="term" value="C:high-density lipoprotein particle"/>
    <property type="evidence" value="ECO:0007669"/>
    <property type="project" value="UniProtKB-KW"/>
</dbReference>
<dbReference type="GO" id="GO:0043231">
    <property type="term" value="C:intracellular membrane-bounded organelle"/>
    <property type="evidence" value="ECO:0000250"/>
    <property type="project" value="UniProtKB"/>
</dbReference>
<dbReference type="GO" id="GO:0004621">
    <property type="term" value="F:glycosylphosphatidylinositol phospholipase D activity"/>
    <property type="evidence" value="ECO:0000314"/>
    <property type="project" value="UniProtKB"/>
</dbReference>
<dbReference type="GO" id="GO:0004630">
    <property type="term" value="F:phospholipase D activity"/>
    <property type="evidence" value="ECO:0000266"/>
    <property type="project" value="RGD"/>
</dbReference>
<dbReference type="GO" id="GO:0017080">
    <property type="term" value="F:sodium channel regulator activity"/>
    <property type="evidence" value="ECO:0000250"/>
    <property type="project" value="UniProtKB"/>
</dbReference>
<dbReference type="GO" id="GO:0002042">
    <property type="term" value="P:cell migration involved in sprouting angiogenesis"/>
    <property type="evidence" value="ECO:0000250"/>
    <property type="project" value="UniProtKB"/>
</dbReference>
<dbReference type="GO" id="GO:0071397">
    <property type="term" value="P:cellular response to cholesterol"/>
    <property type="evidence" value="ECO:0000250"/>
    <property type="project" value="UniProtKB"/>
</dbReference>
<dbReference type="GO" id="GO:0032869">
    <property type="term" value="P:cellular response to insulin stimulus"/>
    <property type="evidence" value="ECO:0000250"/>
    <property type="project" value="UniProtKB"/>
</dbReference>
<dbReference type="GO" id="GO:0071467">
    <property type="term" value="P:cellular response to pH"/>
    <property type="evidence" value="ECO:0000250"/>
    <property type="project" value="UniProtKB"/>
</dbReference>
<dbReference type="GO" id="GO:0071401">
    <property type="term" value="P:cellular response to triglyceride"/>
    <property type="evidence" value="ECO:0000250"/>
    <property type="project" value="UniProtKB"/>
</dbReference>
<dbReference type="GO" id="GO:0071466">
    <property type="term" value="P:cellular response to xenobiotic stimulus"/>
    <property type="evidence" value="ECO:0000250"/>
    <property type="project" value="UniProtKB"/>
</dbReference>
<dbReference type="GO" id="GO:0002062">
    <property type="term" value="P:chondrocyte differentiation"/>
    <property type="evidence" value="ECO:0000250"/>
    <property type="project" value="UniProtKB"/>
</dbReference>
<dbReference type="GO" id="GO:0002430">
    <property type="term" value="P:complement receptor mediated signaling pathway"/>
    <property type="evidence" value="ECO:0000250"/>
    <property type="project" value="UniProtKB"/>
</dbReference>
<dbReference type="GO" id="GO:0008286">
    <property type="term" value="P:insulin receptor signaling pathway"/>
    <property type="evidence" value="ECO:0000250"/>
    <property type="project" value="UniProtKB"/>
</dbReference>
<dbReference type="GO" id="GO:0008285">
    <property type="term" value="P:negative regulation of cell population proliferation"/>
    <property type="evidence" value="ECO:0000250"/>
    <property type="project" value="UniProtKB"/>
</dbReference>
<dbReference type="GO" id="GO:0010897">
    <property type="term" value="P:negative regulation of triglyceride catabolic process"/>
    <property type="evidence" value="ECO:0000250"/>
    <property type="project" value="UniProtKB"/>
</dbReference>
<dbReference type="GO" id="GO:0001503">
    <property type="term" value="P:ossification"/>
    <property type="evidence" value="ECO:0000250"/>
    <property type="project" value="UniProtKB"/>
</dbReference>
<dbReference type="GO" id="GO:0046470">
    <property type="term" value="P:phosphatidylcholine metabolic process"/>
    <property type="evidence" value="ECO:0000250"/>
    <property type="project" value="UniProtKB"/>
</dbReference>
<dbReference type="GO" id="GO:0010694">
    <property type="term" value="P:positive regulation of alkaline phosphatase activity"/>
    <property type="evidence" value="ECO:0000250"/>
    <property type="project" value="UniProtKB"/>
</dbReference>
<dbReference type="GO" id="GO:0043065">
    <property type="term" value="P:positive regulation of apoptotic process"/>
    <property type="evidence" value="ECO:0000250"/>
    <property type="project" value="UniProtKB"/>
</dbReference>
<dbReference type="GO" id="GO:0010595">
    <property type="term" value="P:positive regulation of endothelial cell migration"/>
    <property type="evidence" value="ECO:0000250"/>
    <property type="project" value="UniProtKB"/>
</dbReference>
<dbReference type="GO" id="GO:0010907">
    <property type="term" value="P:positive regulation of glucose metabolic process"/>
    <property type="evidence" value="ECO:0000250"/>
    <property type="project" value="UniProtKB"/>
</dbReference>
<dbReference type="GO" id="GO:0010983">
    <property type="term" value="P:positive regulation of high-density lipoprotein particle clearance"/>
    <property type="evidence" value="ECO:0000250"/>
    <property type="project" value="UniProtKB"/>
</dbReference>
<dbReference type="GO" id="GO:0035774">
    <property type="term" value="P:positive regulation of insulin secretion involved in cellular response to glucose stimulus"/>
    <property type="evidence" value="ECO:0000250"/>
    <property type="project" value="UniProtKB"/>
</dbReference>
<dbReference type="GO" id="GO:0051044">
    <property type="term" value="P:positive regulation of membrane protein ectodomain proteolysis"/>
    <property type="evidence" value="ECO:0000250"/>
    <property type="project" value="UniProtKB"/>
</dbReference>
<dbReference type="GO" id="GO:0010867">
    <property type="term" value="P:positive regulation of triglyceride biosynthetic process"/>
    <property type="evidence" value="ECO:0000250"/>
    <property type="project" value="UniProtKB"/>
</dbReference>
<dbReference type="GO" id="GO:0009306">
    <property type="term" value="P:protein secretion"/>
    <property type="evidence" value="ECO:0000250"/>
    <property type="project" value="UniProtKB"/>
</dbReference>
<dbReference type="GO" id="GO:1900076">
    <property type="term" value="P:regulation of cellular response to insulin stimulus"/>
    <property type="evidence" value="ECO:0000250"/>
    <property type="project" value="UniProtKB"/>
</dbReference>
<dbReference type="GO" id="GO:0009749">
    <property type="term" value="P:response to glucose"/>
    <property type="evidence" value="ECO:0000250"/>
    <property type="project" value="UniProtKB"/>
</dbReference>
<dbReference type="GO" id="GO:0070633">
    <property type="term" value="P:transepithelial transport"/>
    <property type="evidence" value="ECO:0000250"/>
    <property type="project" value="UniProtKB"/>
</dbReference>
<dbReference type="FunFam" id="2.130.10.130:FF:000010">
    <property type="entry name" value="Glycosylphosphatidylinositol specific phospholipase D1"/>
    <property type="match status" value="1"/>
</dbReference>
<dbReference type="FunFam" id="2.130.10.130:FF:000011">
    <property type="entry name" value="Glycosylphosphatidylinositol specific phospholipase D1"/>
    <property type="match status" value="1"/>
</dbReference>
<dbReference type="Gene3D" id="2.130.10.130">
    <property type="entry name" value="Integrin alpha, N-terminal"/>
    <property type="match status" value="3"/>
</dbReference>
<dbReference type="InterPro" id="IPR013517">
    <property type="entry name" value="FG-GAP"/>
</dbReference>
<dbReference type="InterPro" id="IPR001028">
    <property type="entry name" value="Gprt_PLipase_D"/>
</dbReference>
<dbReference type="InterPro" id="IPR013519">
    <property type="entry name" value="Int_alpha_beta-p"/>
</dbReference>
<dbReference type="InterPro" id="IPR028994">
    <property type="entry name" value="Integrin_alpha_N"/>
</dbReference>
<dbReference type="InterPro" id="IPR029002">
    <property type="entry name" value="PLPC/GPLD1"/>
</dbReference>
<dbReference type="PANTHER" id="PTHR23221">
    <property type="entry name" value="GLYCOSYLPHOSPHATIDYLINOSITOL PHOSPHOLIPASE D"/>
    <property type="match status" value="1"/>
</dbReference>
<dbReference type="PANTHER" id="PTHR23221:SF7">
    <property type="entry name" value="PHOSPHATIDYLINOSITOL-GLYCAN-SPECIFIC PHOSPHOLIPASE D"/>
    <property type="match status" value="1"/>
</dbReference>
<dbReference type="Pfam" id="PF01839">
    <property type="entry name" value="FG-GAP"/>
    <property type="match status" value="3"/>
</dbReference>
<dbReference type="Pfam" id="PF00882">
    <property type="entry name" value="Zn_dep_PLPC"/>
    <property type="match status" value="1"/>
</dbReference>
<dbReference type="PRINTS" id="PR00718">
    <property type="entry name" value="PHPHLIPASED"/>
</dbReference>
<dbReference type="SMART" id="SM00191">
    <property type="entry name" value="Int_alpha"/>
    <property type="match status" value="5"/>
</dbReference>
<dbReference type="SUPFAM" id="SSF69318">
    <property type="entry name" value="Integrin alpha N-terminal domain"/>
    <property type="match status" value="1"/>
</dbReference>
<dbReference type="PROSITE" id="PS51470">
    <property type="entry name" value="FG_GAP"/>
    <property type="match status" value="7"/>
</dbReference>
<proteinExistence type="evidence at transcript level"/>
<accession>Q8R2H5</accession>
<name>PHLD_RAT</name>